<dbReference type="EC" id="2.5.1.39" evidence="1"/>
<dbReference type="EMBL" id="CP000948">
    <property type="protein sequence ID" value="ACB05039.1"/>
    <property type="molecule type" value="Genomic_DNA"/>
</dbReference>
<dbReference type="RefSeq" id="WP_000455227.1">
    <property type="nucleotide sequence ID" value="NC_010473.1"/>
</dbReference>
<dbReference type="SMR" id="B1XC39"/>
<dbReference type="GeneID" id="93777791"/>
<dbReference type="KEGG" id="ecd:ECDH10B_4229"/>
<dbReference type="HOGENOM" id="CLU_034879_1_0_6"/>
<dbReference type="UniPathway" id="UPA00232"/>
<dbReference type="GO" id="GO:0005886">
    <property type="term" value="C:plasma membrane"/>
    <property type="evidence" value="ECO:0007669"/>
    <property type="project" value="UniProtKB-SubCell"/>
</dbReference>
<dbReference type="GO" id="GO:0008412">
    <property type="term" value="F:4-hydroxybenzoate polyprenyltransferase activity"/>
    <property type="evidence" value="ECO:0007669"/>
    <property type="project" value="UniProtKB-UniRule"/>
</dbReference>
<dbReference type="GO" id="GO:0006744">
    <property type="term" value="P:ubiquinone biosynthetic process"/>
    <property type="evidence" value="ECO:0007669"/>
    <property type="project" value="UniProtKB-UniRule"/>
</dbReference>
<dbReference type="CDD" id="cd13959">
    <property type="entry name" value="PT_UbiA_COQ2"/>
    <property type="match status" value="1"/>
</dbReference>
<dbReference type="FunFam" id="1.10.357.140:FF:000002">
    <property type="entry name" value="4-hydroxybenzoate octaprenyltransferase"/>
    <property type="match status" value="1"/>
</dbReference>
<dbReference type="FunFam" id="1.20.120.1780:FF:000001">
    <property type="entry name" value="4-hydroxybenzoate octaprenyltransferase"/>
    <property type="match status" value="1"/>
</dbReference>
<dbReference type="Gene3D" id="1.10.357.140">
    <property type="entry name" value="UbiA prenyltransferase"/>
    <property type="match status" value="1"/>
</dbReference>
<dbReference type="Gene3D" id="1.20.120.1780">
    <property type="entry name" value="UbiA prenyltransferase"/>
    <property type="match status" value="1"/>
</dbReference>
<dbReference type="HAMAP" id="MF_01635">
    <property type="entry name" value="UbiA"/>
    <property type="match status" value="1"/>
</dbReference>
<dbReference type="InterPro" id="IPR006370">
    <property type="entry name" value="HB_polyprenyltransferase-like"/>
</dbReference>
<dbReference type="InterPro" id="IPR039653">
    <property type="entry name" value="Prenyltransferase"/>
</dbReference>
<dbReference type="InterPro" id="IPR000537">
    <property type="entry name" value="UbiA_prenyltransferase"/>
</dbReference>
<dbReference type="InterPro" id="IPR030470">
    <property type="entry name" value="UbiA_prenylTrfase_CS"/>
</dbReference>
<dbReference type="InterPro" id="IPR044878">
    <property type="entry name" value="UbiA_sf"/>
</dbReference>
<dbReference type="NCBIfam" id="TIGR01474">
    <property type="entry name" value="ubiA_proteo"/>
    <property type="match status" value="1"/>
</dbReference>
<dbReference type="PANTHER" id="PTHR11048:SF28">
    <property type="entry name" value="4-HYDROXYBENZOATE POLYPRENYLTRANSFERASE, MITOCHONDRIAL"/>
    <property type="match status" value="1"/>
</dbReference>
<dbReference type="PANTHER" id="PTHR11048">
    <property type="entry name" value="PRENYLTRANSFERASES"/>
    <property type="match status" value="1"/>
</dbReference>
<dbReference type="Pfam" id="PF01040">
    <property type="entry name" value="UbiA"/>
    <property type="match status" value="1"/>
</dbReference>
<dbReference type="PROSITE" id="PS00943">
    <property type="entry name" value="UBIA"/>
    <property type="match status" value="1"/>
</dbReference>
<gene>
    <name evidence="1" type="primary">ubiA</name>
    <name type="ordered locus">ECDH10B_4229</name>
</gene>
<feature type="chain" id="PRO_1000186670" description="4-hydroxybenzoate octaprenyltransferase">
    <location>
        <begin position="1"/>
        <end position="290"/>
    </location>
</feature>
<feature type="transmembrane region" description="Helical" evidence="1">
    <location>
        <begin position="23"/>
        <end position="43"/>
    </location>
</feature>
<feature type="transmembrane region" description="Helical" evidence="1">
    <location>
        <begin position="46"/>
        <end position="66"/>
    </location>
</feature>
<feature type="transmembrane region" description="Helical" evidence="1">
    <location>
        <begin position="99"/>
        <end position="119"/>
    </location>
</feature>
<feature type="transmembrane region" description="Helical" evidence="1">
    <location>
        <begin position="141"/>
        <end position="161"/>
    </location>
</feature>
<feature type="transmembrane region" description="Helical" evidence="1">
    <location>
        <begin position="163"/>
        <end position="183"/>
    </location>
</feature>
<feature type="transmembrane region" description="Helical" evidence="1">
    <location>
        <begin position="213"/>
        <end position="233"/>
    </location>
</feature>
<feature type="transmembrane region" description="Helical" evidence="1">
    <location>
        <begin position="234"/>
        <end position="254"/>
    </location>
</feature>
<feature type="transmembrane region" description="Helical" evidence="1">
    <location>
        <begin position="268"/>
        <end position="288"/>
    </location>
</feature>
<reference key="1">
    <citation type="journal article" date="2008" name="J. Bacteriol.">
        <title>The complete genome sequence of Escherichia coli DH10B: insights into the biology of a laboratory workhorse.</title>
        <authorList>
            <person name="Durfee T."/>
            <person name="Nelson R."/>
            <person name="Baldwin S."/>
            <person name="Plunkett G. III"/>
            <person name="Burland V."/>
            <person name="Mau B."/>
            <person name="Petrosino J.F."/>
            <person name="Qin X."/>
            <person name="Muzny D.M."/>
            <person name="Ayele M."/>
            <person name="Gibbs R.A."/>
            <person name="Csorgo B."/>
            <person name="Posfai G."/>
            <person name="Weinstock G.M."/>
            <person name="Blattner F.R."/>
        </authorList>
    </citation>
    <scope>NUCLEOTIDE SEQUENCE [LARGE SCALE GENOMIC DNA]</scope>
    <source>
        <strain>K12 / DH10B</strain>
    </source>
</reference>
<sequence>MEWSLTQNKLLAFHRLMRTDKPIGALLLLWPTLWALWVATPGVPQLWILAVFVAGVWLMRAAGCVVNDYADRKFDGHVKRTANRPLPSGAVTEKEARALFVVLVLISFLLVLTLNTMTILLSIAALALAWVYPFMKRYTHLPQVVLGAAFGWSIPMAFAAVSESVPLSCWLMFLANILWAVAYDTQYAMVDRDDDVKIGIKSTAILFGQYDKLIIGILQIGVLALMAIIGELNGLGWGYYWSILVAGALFVYQQKLIANREREACFKAFMNNNYVGLVLFLGLAMSYWHF</sequence>
<name>UBIA_ECODH</name>
<accession>B1XC39</accession>
<evidence type="ECO:0000255" key="1">
    <source>
        <dbReference type="HAMAP-Rule" id="MF_01635"/>
    </source>
</evidence>
<keyword id="KW-0997">Cell inner membrane</keyword>
<keyword id="KW-1003">Cell membrane</keyword>
<keyword id="KW-0460">Magnesium</keyword>
<keyword id="KW-0472">Membrane</keyword>
<keyword id="KW-0808">Transferase</keyword>
<keyword id="KW-0812">Transmembrane</keyword>
<keyword id="KW-1133">Transmembrane helix</keyword>
<keyword id="KW-0831">Ubiquinone biosynthesis</keyword>
<organism>
    <name type="scientific">Escherichia coli (strain K12 / DH10B)</name>
    <dbReference type="NCBI Taxonomy" id="316385"/>
    <lineage>
        <taxon>Bacteria</taxon>
        <taxon>Pseudomonadati</taxon>
        <taxon>Pseudomonadota</taxon>
        <taxon>Gammaproteobacteria</taxon>
        <taxon>Enterobacterales</taxon>
        <taxon>Enterobacteriaceae</taxon>
        <taxon>Escherichia</taxon>
    </lineage>
</organism>
<protein>
    <recommendedName>
        <fullName evidence="1">4-hydroxybenzoate octaprenyltransferase</fullName>
        <ecNumber evidence="1">2.5.1.39</ecNumber>
    </recommendedName>
    <alternativeName>
        <fullName evidence="1">4-HB polyprenyltransferase</fullName>
    </alternativeName>
</protein>
<comment type="function">
    <text evidence="1">Catalyzes the prenylation of para-hydroxybenzoate (PHB) with an all-trans polyprenyl group. Mediates the second step in the final reaction sequence of ubiquinone-8 (UQ-8) biosynthesis, which is the condensation of the polyisoprenoid side chain with PHB, generating the first membrane-bound Q intermediate 3-octaprenyl-4-hydroxybenzoate.</text>
</comment>
<comment type="catalytic activity">
    <reaction evidence="1">
        <text>all-trans-octaprenyl diphosphate + 4-hydroxybenzoate = 4-hydroxy-3-(all-trans-octaprenyl)benzoate + diphosphate</text>
        <dbReference type="Rhea" id="RHEA:27782"/>
        <dbReference type="ChEBI" id="CHEBI:1617"/>
        <dbReference type="ChEBI" id="CHEBI:17879"/>
        <dbReference type="ChEBI" id="CHEBI:33019"/>
        <dbReference type="ChEBI" id="CHEBI:57711"/>
        <dbReference type="EC" id="2.5.1.39"/>
    </reaction>
</comment>
<comment type="cofactor">
    <cofactor evidence="1">
        <name>Mg(2+)</name>
        <dbReference type="ChEBI" id="CHEBI:18420"/>
    </cofactor>
</comment>
<comment type="pathway">
    <text evidence="1">Cofactor biosynthesis; ubiquinone biosynthesis.</text>
</comment>
<comment type="subcellular location">
    <subcellularLocation>
        <location evidence="1">Cell inner membrane</location>
        <topology evidence="1">Multi-pass membrane protein</topology>
    </subcellularLocation>
</comment>
<comment type="similarity">
    <text evidence="1">Belongs to the UbiA prenyltransferase family.</text>
</comment>
<proteinExistence type="inferred from homology"/>